<accession>Q3KSP1</accession>
<feature type="chain" id="PRO_0000375926" description="DNA polymerase catalytic subunit">
    <location>
        <begin position="1"/>
        <end position="1015"/>
    </location>
</feature>
<gene>
    <name type="ORF">BALF5</name>
</gene>
<reference key="1">
    <citation type="journal article" date="2005" name="J. Virol.">
        <title>Genomic sequence analysis of Epstein-Barr virus strain GD1 from a nasopharyngeal carcinoma patient.</title>
        <authorList>
            <person name="Zeng M.-S."/>
            <person name="Li D.-J."/>
            <person name="Liu Q.-L."/>
            <person name="Song L.-B."/>
            <person name="Li M.-Z."/>
            <person name="Zhang R.-H."/>
            <person name="Yu X.-J."/>
            <person name="Wang H.-M."/>
            <person name="Ernberg I."/>
            <person name="Zeng Y.-X."/>
        </authorList>
    </citation>
    <scope>NUCLEOTIDE SEQUENCE [LARGE SCALE GENOMIC DNA]</scope>
</reference>
<name>DPOL_EBVG</name>
<sequence>MSGGLFYNPFLRPNKGLLKKPDKEYLRLIPKCFQTPGAAGVVDVRGPQTPLCFYQDSLTVVGGDEDGKGMWWRQRAQEGTARPEADTHGSPLDFHVYDILETVYTHEKCAVIPSDKQGYVVPCGIVIKLLGRRKADGASVCVNVFGQQAYFYASAPQGLDVEFAVLSALKASTFDRRTPCRVSVEKVTRRSIMGYGNHAGDYHKITLSHPNSVCHVATWLQDKHGCRIFEANVDATRRFVLDNDFVTFGWYSCRRAIPRLQHRDSYAELEYDCEVGDLSVRREDSSWPSYQALAFDIECLGEEGFPTATNEADLILQISCVLWSTGEEAGRYRRILLTLGTCEDIEGVEVYEFPSELDMLYAFFQLIRDLSVEIVTGYNVANFDWPYILDRARHIYSINPASLGKIRAGGVCEVRRPHDAGKGFLRANTKVRITGLIPIDMYAVCRDKLSLSDYKLDTVARHLLGAKKEDVHYKEIPRLFAAGPEGRRRLGMYCVQDSALVMDLLNHFVIHVEVAEIAKIAHIPCRRVLDDGQQIRVFSCLLAAAQKENFILPMPSASDRDGYQGATVIQPLSGFYNSPVLVVDFASLYPSIIQAHNLCYSTMITPGEEHRLAGLRPGEDYESFRLTGGVYHFVKKHVHESFLASLLTSWLAKRKAIKKLLAACEDPRQRTILDKQQLAIKCTCNAVYGFTGVANGLFPCLSIAETVTLQGRTMLERAKAFVEALSPANLQALAPSPDAWAPLNPEGQLRVIYGDTDSLFIECRGFSESETLRFAEALAAHTTRSLFVAPISLEAEKTFSCLMLITKKRYVGVLTDGKTLMKGVELVRKTACKFVQTRCRRVLDLVLADARVKEAASLLSHRPFQESFTQGLPVGFLPVIDILNQAYTDLREGRVPMGELCFSTELSRKLSAYKSTQMPHLAVYQKFVERNEELPQIHDRIQYVFVEPKGGVKGARKTEMAEDPAYAERHGVPVAVDHYFDKLLQGAANILQCLFDNNSGAALSVLQNFTARPPF</sequence>
<protein>
    <recommendedName>
        <fullName>DNA polymerase catalytic subunit</fullName>
        <ecNumber>2.7.7.7</ecNumber>
    </recommendedName>
</protein>
<organismHost>
    <name type="scientific">Homo sapiens</name>
    <name type="common">Human</name>
    <dbReference type="NCBI Taxonomy" id="9606"/>
</organismHost>
<evidence type="ECO:0000250" key="1"/>
<evidence type="ECO:0000305" key="2"/>
<organism>
    <name type="scientific">Epstein-Barr virus (strain GD1)</name>
    <name type="common">HHV-4</name>
    <name type="synonym">Human gammaherpesvirus 4</name>
    <dbReference type="NCBI Taxonomy" id="10376"/>
    <lineage>
        <taxon>Viruses</taxon>
        <taxon>Duplodnaviria</taxon>
        <taxon>Heunggongvirae</taxon>
        <taxon>Peploviricota</taxon>
        <taxon>Herviviricetes</taxon>
        <taxon>Herpesvirales</taxon>
        <taxon>Orthoherpesviridae</taxon>
        <taxon>Gammaherpesvirinae</taxon>
        <taxon>Lymphocryptovirus</taxon>
        <taxon>Lymphocryptovirus humangamma4</taxon>
    </lineage>
</organism>
<proteinExistence type="inferred from homology"/>
<keyword id="KW-0235">DNA replication</keyword>
<keyword id="KW-0238">DNA-binding</keyword>
<keyword id="KW-0239">DNA-directed DNA polymerase</keyword>
<keyword id="KW-1048">Host nucleus</keyword>
<keyword id="KW-0548">Nucleotidyltransferase</keyword>
<keyword id="KW-0808">Transferase</keyword>
<keyword id="KW-1194">Viral DNA replication</keyword>
<comment type="function">
    <text evidence="1">Replicates viral genomic DNA in the late phase of lytic infection, producing long concatemeric DNA. The replication complex is composed of six viral proteins: the DNA polymerase, processivity factor, primase, primase-associated factor, helicase, and ssDNA-binding protein (By similarity).</text>
</comment>
<comment type="catalytic activity">
    <reaction>
        <text>DNA(n) + a 2'-deoxyribonucleoside 5'-triphosphate = DNA(n+1) + diphosphate</text>
        <dbReference type="Rhea" id="RHEA:22508"/>
        <dbReference type="Rhea" id="RHEA-COMP:17339"/>
        <dbReference type="Rhea" id="RHEA-COMP:17340"/>
        <dbReference type="ChEBI" id="CHEBI:33019"/>
        <dbReference type="ChEBI" id="CHEBI:61560"/>
        <dbReference type="ChEBI" id="CHEBI:173112"/>
        <dbReference type="EC" id="2.7.7.7"/>
    </reaction>
</comment>
<comment type="subunit">
    <text evidence="1">Forms a complex with the major DNA-binding protein BALF2, the DNA polymerase processivity factor BMRF1, and the alkaline exonuclease BGLF5. Interacts with the putative helicase-primase complex composed of BBLF4, BSLF1 and BBLF2/3 proteins; these interactions may coordinate leading and lagging strand DNA synthesis at the replication fork (By similarity).</text>
</comment>
<comment type="subcellular location">
    <subcellularLocation>
        <location>Host nucleus</location>
    </subcellularLocation>
    <text evidence="1">the protein is present at discrete sites in nuclei, called replication compartments where viral DNA replication occurs.</text>
</comment>
<comment type="similarity">
    <text evidence="2">Belongs to the DNA polymerase type-B family.</text>
</comment>
<dbReference type="EC" id="2.7.7.7"/>
<dbReference type="EMBL" id="AY961628">
    <property type="protein sequence ID" value="AAY41154.1"/>
    <property type="molecule type" value="Genomic_DNA"/>
</dbReference>
<dbReference type="SMR" id="Q3KSP1"/>
<dbReference type="Proteomes" id="UP000007641">
    <property type="component" value="Genome"/>
</dbReference>
<dbReference type="GO" id="GO:0042025">
    <property type="term" value="C:host cell nucleus"/>
    <property type="evidence" value="ECO:0007669"/>
    <property type="project" value="UniProtKB-SubCell"/>
</dbReference>
<dbReference type="GO" id="GO:0008296">
    <property type="term" value="F:3'-5'-DNA exonuclease activity"/>
    <property type="evidence" value="ECO:0007669"/>
    <property type="project" value="TreeGrafter"/>
</dbReference>
<dbReference type="GO" id="GO:0003677">
    <property type="term" value="F:DNA binding"/>
    <property type="evidence" value="ECO:0007669"/>
    <property type="project" value="UniProtKB-KW"/>
</dbReference>
<dbReference type="GO" id="GO:0003887">
    <property type="term" value="F:DNA-directed DNA polymerase activity"/>
    <property type="evidence" value="ECO:0007669"/>
    <property type="project" value="UniProtKB-KW"/>
</dbReference>
<dbReference type="GO" id="GO:0000166">
    <property type="term" value="F:nucleotide binding"/>
    <property type="evidence" value="ECO:0007669"/>
    <property type="project" value="InterPro"/>
</dbReference>
<dbReference type="GO" id="GO:0006287">
    <property type="term" value="P:base-excision repair, gap-filling"/>
    <property type="evidence" value="ECO:0007669"/>
    <property type="project" value="TreeGrafter"/>
</dbReference>
<dbReference type="GO" id="GO:0045004">
    <property type="term" value="P:DNA replication proofreading"/>
    <property type="evidence" value="ECO:0007669"/>
    <property type="project" value="TreeGrafter"/>
</dbReference>
<dbReference type="GO" id="GO:0006297">
    <property type="term" value="P:nucleotide-excision repair, DNA gap filling"/>
    <property type="evidence" value="ECO:0007669"/>
    <property type="project" value="TreeGrafter"/>
</dbReference>
<dbReference type="GO" id="GO:0039693">
    <property type="term" value="P:viral DNA genome replication"/>
    <property type="evidence" value="ECO:0007669"/>
    <property type="project" value="UniProtKB-KW"/>
</dbReference>
<dbReference type="FunFam" id="1.10.287.690:FF:000006">
    <property type="entry name" value="DNA polymerase"/>
    <property type="match status" value="1"/>
</dbReference>
<dbReference type="FunFam" id="3.30.420.10:FF:000004">
    <property type="entry name" value="DNA polymerase"/>
    <property type="match status" value="1"/>
</dbReference>
<dbReference type="FunFam" id="1.10.132.60:FF:000011">
    <property type="entry name" value="DNA polymerase catalytic subunit"/>
    <property type="match status" value="1"/>
</dbReference>
<dbReference type="FunFam" id="3.30.342.10:FF:000026">
    <property type="entry name" value="DNA polymerase catalytic subunit"/>
    <property type="match status" value="1"/>
</dbReference>
<dbReference type="Gene3D" id="1.10.132.60">
    <property type="entry name" value="DNA polymerase family B, C-terminal domain"/>
    <property type="match status" value="1"/>
</dbReference>
<dbReference type="Gene3D" id="3.30.342.10">
    <property type="entry name" value="DNA Polymerase, chain B, domain 1"/>
    <property type="match status" value="1"/>
</dbReference>
<dbReference type="Gene3D" id="1.10.287.690">
    <property type="entry name" value="Helix hairpin bin"/>
    <property type="match status" value="1"/>
</dbReference>
<dbReference type="Gene3D" id="3.90.1600.10">
    <property type="entry name" value="Palm domain of DNA polymerase"/>
    <property type="match status" value="1"/>
</dbReference>
<dbReference type="Gene3D" id="3.30.420.10">
    <property type="entry name" value="Ribonuclease H-like superfamily/Ribonuclease H"/>
    <property type="match status" value="1"/>
</dbReference>
<dbReference type="InterPro" id="IPR006172">
    <property type="entry name" value="DNA-dir_DNA_pol_B"/>
</dbReference>
<dbReference type="InterPro" id="IPR017964">
    <property type="entry name" value="DNA-dir_DNA_pol_B_CS"/>
</dbReference>
<dbReference type="InterPro" id="IPR006133">
    <property type="entry name" value="DNA-dir_DNA_pol_B_exonuc"/>
</dbReference>
<dbReference type="InterPro" id="IPR006134">
    <property type="entry name" value="DNA-dir_DNA_pol_B_multi_dom"/>
</dbReference>
<dbReference type="InterPro" id="IPR043502">
    <property type="entry name" value="DNA/RNA_pol_sf"/>
</dbReference>
<dbReference type="InterPro" id="IPR042087">
    <property type="entry name" value="DNA_pol_B_thumb"/>
</dbReference>
<dbReference type="InterPro" id="IPR023211">
    <property type="entry name" value="DNA_pol_palm_dom_sf"/>
</dbReference>
<dbReference type="InterPro" id="IPR050240">
    <property type="entry name" value="DNA_pol_type-B"/>
</dbReference>
<dbReference type="InterPro" id="IPR012337">
    <property type="entry name" value="RNaseH-like_sf"/>
</dbReference>
<dbReference type="InterPro" id="IPR036397">
    <property type="entry name" value="RNaseH_sf"/>
</dbReference>
<dbReference type="PANTHER" id="PTHR10322">
    <property type="entry name" value="DNA POLYMERASE CATALYTIC SUBUNIT"/>
    <property type="match status" value="1"/>
</dbReference>
<dbReference type="PANTHER" id="PTHR10322:SF23">
    <property type="entry name" value="DNA POLYMERASE DELTA CATALYTIC SUBUNIT"/>
    <property type="match status" value="1"/>
</dbReference>
<dbReference type="Pfam" id="PF00136">
    <property type="entry name" value="DNA_pol_B"/>
    <property type="match status" value="1"/>
</dbReference>
<dbReference type="Pfam" id="PF03104">
    <property type="entry name" value="DNA_pol_B_exo1"/>
    <property type="match status" value="1"/>
</dbReference>
<dbReference type="PRINTS" id="PR00106">
    <property type="entry name" value="DNAPOLB"/>
</dbReference>
<dbReference type="SMART" id="SM00486">
    <property type="entry name" value="POLBc"/>
    <property type="match status" value="1"/>
</dbReference>
<dbReference type="SUPFAM" id="SSF56672">
    <property type="entry name" value="DNA/RNA polymerases"/>
    <property type="match status" value="1"/>
</dbReference>
<dbReference type="SUPFAM" id="SSF53098">
    <property type="entry name" value="Ribonuclease H-like"/>
    <property type="match status" value="1"/>
</dbReference>
<dbReference type="PROSITE" id="PS00116">
    <property type="entry name" value="DNA_POLYMERASE_B"/>
    <property type="match status" value="1"/>
</dbReference>